<proteinExistence type="inferred from homology"/>
<accession>Q7W570</accession>
<evidence type="ECO:0000255" key="1">
    <source>
        <dbReference type="HAMAP-Rule" id="MF_01595"/>
    </source>
</evidence>
<name>PNP_BORPA</name>
<sequence>MFNKVTKTFQYGQHSVVLETGEMARQASGAVLVSVEDTVVLATVVAAKKAKAGQDFFPLTVDYIEKTYAAGRIPGGFFKREGKPSEKETLTSRLIDRPLRPLFPEGFYNDVQVVIHTLSVNPDIDPDIPAMIGASAALAISGIPFNGPIGAARVGYVDGQYVLNPTATQLKSSKMDLVVAGTENAVLMVESEAKQLSEEIMLGGVVFGHEQMQAAINAIHDLVRDAGKPDWDWQPAPKNEALIAAVSAAAQEGLNAAYQIREKQARTTKLREVYAAVQAAMAEQAAQAGQPAPDSVGVDNILFDLEARIVRSQILNGEPRIDGRDTRTVRPISIRLGVLPRAHGSALFTRGETQALVVATLGTKQDEQIIDALMGEYRDRFMLHYNMPPFATGETGRIGVPKRREIGHGRLAKRALLPLLPAPEDFQYTIRLVSEITESNGSSSMASVCGGSLAMMDAGVPTNDHVAGVAMGLILDSGKFAVLTDILGDEDHLGDMDFKVAGTETGITALQMDIKIQGITKEIMQVALAQAREGRLHILGKMRDALEGSRTELSAFAPRMLTIKINPEKIRDVIGKGGATIRALTEETGTQIDISDDGTIVIASVDETQAKEAQRRIVELTADVEVGQIYDGSVLRLLDFGAIVQVLPGRDGLLHISEIANYRIANINDVLKVGQPVRVKVIEADDKGRLRLSIKAIGGIEQQQSGTAEPAAQSEPQAE</sequence>
<protein>
    <recommendedName>
        <fullName evidence="1">Polyribonucleotide nucleotidyltransferase</fullName>
        <ecNumber evidence="1">2.7.7.8</ecNumber>
    </recommendedName>
    <alternativeName>
        <fullName evidence="1">Polynucleotide phosphorylase</fullName>
        <shortName evidence="1">PNPase</shortName>
    </alternativeName>
</protein>
<keyword id="KW-0963">Cytoplasm</keyword>
<keyword id="KW-0460">Magnesium</keyword>
<keyword id="KW-0479">Metal-binding</keyword>
<keyword id="KW-0548">Nucleotidyltransferase</keyword>
<keyword id="KW-0694">RNA-binding</keyword>
<keyword id="KW-0808">Transferase</keyword>
<organism>
    <name type="scientific">Bordetella parapertussis (strain 12822 / ATCC BAA-587 / NCTC 13253)</name>
    <dbReference type="NCBI Taxonomy" id="257311"/>
    <lineage>
        <taxon>Bacteria</taxon>
        <taxon>Pseudomonadati</taxon>
        <taxon>Pseudomonadota</taxon>
        <taxon>Betaproteobacteria</taxon>
        <taxon>Burkholderiales</taxon>
        <taxon>Alcaligenaceae</taxon>
        <taxon>Bordetella</taxon>
    </lineage>
</organism>
<gene>
    <name evidence="1" type="primary">pnp</name>
    <name type="ordered locus">BPP3431</name>
</gene>
<reference key="1">
    <citation type="journal article" date="2003" name="Nat. Genet.">
        <title>Comparative analysis of the genome sequences of Bordetella pertussis, Bordetella parapertussis and Bordetella bronchiseptica.</title>
        <authorList>
            <person name="Parkhill J."/>
            <person name="Sebaihia M."/>
            <person name="Preston A."/>
            <person name="Murphy L.D."/>
            <person name="Thomson N.R."/>
            <person name="Harris D.E."/>
            <person name="Holden M.T.G."/>
            <person name="Churcher C.M."/>
            <person name="Bentley S.D."/>
            <person name="Mungall K.L."/>
            <person name="Cerdeno-Tarraga A.-M."/>
            <person name="Temple L."/>
            <person name="James K.D."/>
            <person name="Harris B."/>
            <person name="Quail M.A."/>
            <person name="Achtman M."/>
            <person name="Atkin R."/>
            <person name="Baker S."/>
            <person name="Basham D."/>
            <person name="Bason N."/>
            <person name="Cherevach I."/>
            <person name="Chillingworth T."/>
            <person name="Collins M."/>
            <person name="Cronin A."/>
            <person name="Davis P."/>
            <person name="Doggett J."/>
            <person name="Feltwell T."/>
            <person name="Goble A."/>
            <person name="Hamlin N."/>
            <person name="Hauser H."/>
            <person name="Holroyd S."/>
            <person name="Jagels K."/>
            <person name="Leather S."/>
            <person name="Moule S."/>
            <person name="Norberczak H."/>
            <person name="O'Neil S."/>
            <person name="Ormond D."/>
            <person name="Price C."/>
            <person name="Rabbinowitsch E."/>
            <person name="Rutter S."/>
            <person name="Sanders M."/>
            <person name="Saunders D."/>
            <person name="Seeger K."/>
            <person name="Sharp S."/>
            <person name="Simmonds M."/>
            <person name="Skelton J."/>
            <person name="Squares R."/>
            <person name="Squares S."/>
            <person name="Stevens K."/>
            <person name="Unwin L."/>
            <person name="Whitehead S."/>
            <person name="Barrell B.G."/>
            <person name="Maskell D.J."/>
        </authorList>
    </citation>
    <scope>NUCLEOTIDE SEQUENCE [LARGE SCALE GENOMIC DNA]</scope>
    <source>
        <strain>12822 / ATCC BAA-587 / NCTC 13253</strain>
    </source>
</reference>
<feature type="chain" id="PRO_0000329537" description="Polyribonucleotide nucleotidyltransferase">
    <location>
        <begin position="1"/>
        <end position="719"/>
    </location>
</feature>
<feature type="domain" description="KH" evidence="1">
    <location>
        <begin position="558"/>
        <end position="617"/>
    </location>
</feature>
<feature type="domain" description="S1 motif" evidence="1">
    <location>
        <begin position="627"/>
        <end position="695"/>
    </location>
</feature>
<feature type="binding site" evidence="1">
    <location>
        <position position="491"/>
    </location>
    <ligand>
        <name>Mg(2+)</name>
        <dbReference type="ChEBI" id="CHEBI:18420"/>
    </ligand>
</feature>
<feature type="binding site" evidence="1">
    <location>
        <position position="497"/>
    </location>
    <ligand>
        <name>Mg(2+)</name>
        <dbReference type="ChEBI" id="CHEBI:18420"/>
    </ligand>
</feature>
<comment type="function">
    <text evidence="1">Involved in mRNA degradation. Catalyzes the phosphorolysis of single-stranded polyribonucleotides processively in the 3'- to 5'-direction.</text>
</comment>
<comment type="catalytic activity">
    <reaction evidence="1">
        <text>RNA(n+1) + phosphate = RNA(n) + a ribonucleoside 5'-diphosphate</text>
        <dbReference type="Rhea" id="RHEA:22096"/>
        <dbReference type="Rhea" id="RHEA-COMP:14527"/>
        <dbReference type="Rhea" id="RHEA-COMP:17342"/>
        <dbReference type="ChEBI" id="CHEBI:43474"/>
        <dbReference type="ChEBI" id="CHEBI:57930"/>
        <dbReference type="ChEBI" id="CHEBI:140395"/>
        <dbReference type="EC" id="2.7.7.8"/>
    </reaction>
</comment>
<comment type="cofactor">
    <cofactor evidence="1">
        <name>Mg(2+)</name>
        <dbReference type="ChEBI" id="CHEBI:18420"/>
    </cofactor>
</comment>
<comment type="subcellular location">
    <subcellularLocation>
        <location evidence="1">Cytoplasm</location>
    </subcellularLocation>
</comment>
<comment type="similarity">
    <text evidence="1">Belongs to the polyribonucleotide nucleotidyltransferase family.</text>
</comment>
<dbReference type="EC" id="2.7.7.8" evidence="1"/>
<dbReference type="EMBL" id="BX640433">
    <property type="protein sequence ID" value="CAE38716.1"/>
    <property type="molecule type" value="Genomic_DNA"/>
</dbReference>
<dbReference type="RefSeq" id="WP_003821234.1">
    <property type="nucleotide sequence ID" value="NC_002928.3"/>
</dbReference>
<dbReference type="SMR" id="Q7W570"/>
<dbReference type="GeneID" id="93205216"/>
<dbReference type="KEGG" id="bpa:BPP3431"/>
<dbReference type="HOGENOM" id="CLU_004217_2_2_4"/>
<dbReference type="Proteomes" id="UP000001421">
    <property type="component" value="Chromosome"/>
</dbReference>
<dbReference type="GO" id="GO:0005829">
    <property type="term" value="C:cytosol"/>
    <property type="evidence" value="ECO:0007669"/>
    <property type="project" value="TreeGrafter"/>
</dbReference>
<dbReference type="GO" id="GO:0000175">
    <property type="term" value="F:3'-5'-RNA exonuclease activity"/>
    <property type="evidence" value="ECO:0007669"/>
    <property type="project" value="TreeGrafter"/>
</dbReference>
<dbReference type="GO" id="GO:0000287">
    <property type="term" value="F:magnesium ion binding"/>
    <property type="evidence" value="ECO:0007669"/>
    <property type="project" value="UniProtKB-UniRule"/>
</dbReference>
<dbReference type="GO" id="GO:0004654">
    <property type="term" value="F:polyribonucleotide nucleotidyltransferase activity"/>
    <property type="evidence" value="ECO:0007669"/>
    <property type="project" value="UniProtKB-UniRule"/>
</dbReference>
<dbReference type="GO" id="GO:0003723">
    <property type="term" value="F:RNA binding"/>
    <property type="evidence" value="ECO:0007669"/>
    <property type="project" value="UniProtKB-UniRule"/>
</dbReference>
<dbReference type="GO" id="GO:0006402">
    <property type="term" value="P:mRNA catabolic process"/>
    <property type="evidence" value="ECO:0007669"/>
    <property type="project" value="UniProtKB-UniRule"/>
</dbReference>
<dbReference type="GO" id="GO:0006396">
    <property type="term" value="P:RNA processing"/>
    <property type="evidence" value="ECO:0007669"/>
    <property type="project" value="InterPro"/>
</dbReference>
<dbReference type="CDD" id="cd02393">
    <property type="entry name" value="KH-I_PNPase"/>
    <property type="match status" value="1"/>
</dbReference>
<dbReference type="CDD" id="cd11363">
    <property type="entry name" value="RNase_PH_PNPase_1"/>
    <property type="match status" value="1"/>
</dbReference>
<dbReference type="CDD" id="cd11364">
    <property type="entry name" value="RNase_PH_PNPase_2"/>
    <property type="match status" value="1"/>
</dbReference>
<dbReference type="CDD" id="cd04472">
    <property type="entry name" value="S1_PNPase"/>
    <property type="match status" value="1"/>
</dbReference>
<dbReference type="FunFam" id="3.30.1370.10:FF:000001">
    <property type="entry name" value="Polyribonucleotide nucleotidyltransferase"/>
    <property type="match status" value="1"/>
</dbReference>
<dbReference type="FunFam" id="3.30.230.70:FF:000001">
    <property type="entry name" value="Polyribonucleotide nucleotidyltransferase"/>
    <property type="match status" value="1"/>
</dbReference>
<dbReference type="FunFam" id="3.30.230.70:FF:000002">
    <property type="entry name" value="Polyribonucleotide nucleotidyltransferase"/>
    <property type="match status" value="1"/>
</dbReference>
<dbReference type="FunFam" id="2.40.50.140:FF:000189">
    <property type="entry name" value="Polyribonucleotide nucleotidyltransferase, putative"/>
    <property type="match status" value="1"/>
</dbReference>
<dbReference type="Gene3D" id="3.30.230.70">
    <property type="entry name" value="GHMP Kinase, N-terminal domain"/>
    <property type="match status" value="2"/>
</dbReference>
<dbReference type="Gene3D" id="3.30.1370.10">
    <property type="entry name" value="K Homology domain, type 1"/>
    <property type="match status" value="1"/>
</dbReference>
<dbReference type="Gene3D" id="2.40.50.140">
    <property type="entry name" value="Nucleic acid-binding proteins"/>
    <property type="match status" value="1"/>
</dbReference>
<dbReference type="HAMAP" id="MF_01595">
    <property type="entry name" value="PNPase"/>
    <property type="match status" value="1"/>
</dbReference>
<dbReference type="InterPro" id="IPR001247">
    <property type="entry name" value="ExoRNase_PH_dom1"/>
</dbReference>
<dbReference type="InterPro" id="IPR015847">
    <property type="entry name" value="ExoRNase_PH_dom2"/>
</dbReference>
<dbReference type="InterPro" id="IPR036345">
    <property type="entry name" value="ExoRNase_PH_dom2_sf"/>
</dbReference>
<dbReference type="InterPro" id="IPR004087">
    <property type="entry name" value="KH_dom"/>
</dbReference>
<dbReference type="InterPro" id="IPR004088">
    <property type="entry name" value="KH_dom_type_1"/>
</dbReference>
<dbReference type="InterPro" id="IPR036612">
    <property type="entry name" value="KH_dom_type_1_sf"/>
</dbReference>
<dbReference type="InterPro" id="IPR012340">
    <property type="entry name" value="NA-bd_OB-fold"/>
</dbReference>
<dbReference type="InterPro" id="IPR012162">
    <property type="entry name" value="PNPase"/>
</dbReference>
<dbReference type="InterPro" id="IPR027408">
    <property type="entry name" value="PNPase/RNase_PH_dom_sf"/>
</dbReference>
<dbReference type="InterPro" id="IPR015848">
    <property type="entry name" value="PNPase_PH_RNA-bd_bac/org-type"/>
</dbReference>
<dbReference type="InterPro" id="IPR036456">
    <property type="entry name" value="PNPase_PH_RNA-bd_sf"/>
</dbReference>
<dbReference type="InterPro" id="IPR020568">
    <property type="entry name" value="Ribosomal_Su5_D2-typ_SF"/>
</dbReference>
<dbReference type="InterPro" id="IPR003029">
    <property type="entry name" value="S1_domain"/>
</dbReference>
<dbReference type="NCBIfam" id="TIGR03591">
    <property type="entry name" value="polynuc_phos"/>
    <property type="match status" value="1"/>
</dbReference>
<dbReference type="NCBIfam" id="NF008805">
    <property type="entry name" value="PRK11824.1"/>
    <property type="match status" value="1"/>
</dbReference>
<dbReference type="PANTHER" id="PTHR11252">
    <property type="entry name" value="POLYRIBONUCLEOTIDE NUCLEOTIDYLTRANSFERASE"/>
    <property type="match status" value="1"/>
</dbReference>
<dbReference type="PANTHER" id="PTHR11252:SF0">
    <property type="entry name" value="POLYRIBONUCLEOTIDE NUCLEOTIDYLTRANSFERASE 1, MITOCHONDRIAL"/>
    <property type="match status" value="1"/>
</dbReference>
<dbReference type="Pfam" id="PF00013">
    <property type="entry name" value="KH_1"/>
    <property type="match status" value="1"/>
</dbReference>
<dbReference type="Pfam" id="PF03726">
    <property type="entry name" value="PNPase"/>
    <property type="match status" value="1"/>
</dbReference>
<dbReference type="Pfam" id="PF01138">
    <property type="entry name" value="RNase_PH"/>
    <property type="match status" value="2"/>
</dbReference>
<dbReference type="Pfam" id="PF03725">
    <property type="entry name" value="RNase_PH_C"/>
    <property type="match status" value="2"/>
</dbReference>
<dbReference type="Pfam" id="PF00575">
    <property type="entry name" value="S1"/>
    <property type="match status" value="1"/>
</dbReference>
<dbReference type="PIRSF" id="PIRSF005499">
    <property type="entry name" value="PNPase"/>
    <property type="match status" value="1"/>
</dbReference>
<dbReference type="SMART" id="SM00322">
    <property type="entry name" value="KH"/>
    <property type="match status" value="1"/>
</dbReference>
<dbReference type="SMART" id="SM00316">
    <property type="entry name" value="S1"/>
    <property type="match status" value="1"/>
</dbReference>
<dbReference type="SUPFAM" id="SSF54791">
    <property type="entry name" value="Eukaryotic type KH-domain (KH-domain type I)"/>
    <property type="match status" value="1"/>
</dbReference>
<dbReference type="SUPFAM" id="SSF50249">
    <property type="entry name" value="Nucleic acid-binding proteins"/>
    <property type="match status" value="1"/>
</dbReference>
<dbReference type="SUPFAM" id="SSF46915">
    <property type="entry name" value="Polynucleotide phosphorylase/guanosine pentaphosphate synthase (PNPase/GPSI), domain 3"/>
    <property type="match status" value="1"/>
</dbReference>
<dbReference type="SUPFAM" id="SSF55666">
    <property type="entry name" value="Ribonuclease PH domain 2-like"/>
    <property type="match status" value="2"/>
</dbReference>
<dbReference type="SUPFAM" id="SSF54211">
    <property type="entry name" value="Ribosomal protein S5 domain 2-like"/>
    <property type="match status" value="2"/>
</dbReference>
<dbReference type="PROSITE" id="PS50084">
    <property type="entry name" value="KH_TYPE_1"/>
    <property type="match status" value="1"/>
</dbReference>
<dbReference type="PROSITE" id="PS50126">
    <property type="entry name" value="S1"/>
    <property type="match status" value="1"/>
</dbReference>